<protein>
    <recommendedName>
        <fullName evidence="1">CRISPR-associated endoribonuclease Cas2</fullName>
        <ecNumber evidence="1">3.1.-.-</ecNumber>
    </recommendedName>
</protein>
<organism>
    <name type="scientific">Campylobacter jejuni subsp. jejuni serotype O:2 (strain ATCC 700819 / NCTC 11168)</name>
    <dbReference type="NCBI Taxonomy" id="192222"/>
    <lineage>
        <taxon>Bacteria</taxon>
        <taxon>Pseudomonadati</taxon>
        <taxon>Campylobacterota</taxon>
        <taxon>Epsilonproteobacteria</taxon>
        <taxon>Campylobacterales</taxon>
        <taxon>Campylobacteraceae</taxon>
        <taxon>Campylobacter</taxon>
    </lineage>
</organism>
<feature type="chain" id="PRO_0000417703" description="CRISPR-associated endoribonuclease Cas2">
    <location>
        <begin position="1"/>
        <end position="143"/>
    </location>
</feature>
<feature type="binding site" evidence="1">
    <location>
        <position position="14"/>
    </location>
    <ligand>
        <name>Mg(2+)</name>
        <dbReference type="ChEBI" id="CHEBI:18420"/>
        <note>catalytic</note>
    </ligand>
</feature>
<reference key="1">
    <citation type="journal article" date="2000" name="Nature">
        <title>The genome sequence of the food-borne pathogen Campylobacter jejuni reveals hypervariable sequences.</title>
        <authorList>
            <person name="Parkhill J."/>
            <person name="Wren B.W."/>
            <person name="Mungall K.L."/>
            <person name="Ketley J.M."/>
            <person name="Churcher C.M."/>
            <person name="Basham D."/>
            <person name="Chillingworth T."/>
            <person name="Davies R.M."/>
            <person name="Feltwell T."/>
            <person name="Holroyd S."/>
            <person name="Jagels K."/>
            <person name="Karlyshev A.V."/>
            <person name="Moule S."/>
            <person name="Pallen M.J."/>
            <person name="Penn C.W."/>
            <person name="Quail M.A."/>
            <person name="Rajandream M.A."/>
            <person name="Rutherford K.M."/>
            <person name="van Vliet A.H.M."/>
            <person name="Whitehead S."/>
            <person name="Barrell B.G."/>
        </authorList>
    </citation>
    <scope>NUCLEOTIDE SEQUENCE [LARGE SCALE GENOMIC DNA]</scope>
    <source>
        <strain>ATCC 700819 / NCTC 11168</strain>
    </source>
</reference>
<dbReference type="EC" id="3.1.-.-" evidence="1"/>
<dbReference type="EMBL" id="AL111168">
    <property type="protein sequence ID" value="CAL35625.1"/>
    <property type="molecule type" value="Genomic_DNA"/>
</dbReference>
<dbReference type="PIR" id="D81299">
    <property type="entry name" value="D81299"/>
</dbReference>
<dbReference type="RefSeq" id="WP_002797817.1">
    <property type="nucleotide sequence ID" value="NZ_SZUC01000003.1"/>
</dbReference>
<dbReference type="RefSeq" id="YP_002344898.1">
    <property type="nucleotide sequence ID" value="NC_002163.1"/>
</dbReference>
<dbReference type="SMR" id="Q0P899"/>
<dbReference type="STRING" id="192222.Cj1521c"/>
<dbReference type="PaxDb" id="192222-Cj1521c"/>
<dbReference type="EnsemblBacteria" id="CAL35625">
    <property type="protein sequence ID" value="CAL35625"/>
    <property type="gene ID" value="Cj1521c"/>
</dbReference>
<dbReference type="GeneID" id="905810"/>
<dbReference type="KEGG" id="cje:Cj1521c"/>
<dbReference type="PATRIC" id="fig|192222.6.peg.1499"/>
<dbReference type="eggNOG" id="COG3512">
    <property type="taxonomic scope" value="Bacteria"/>
</dbReference>
<dbReference type="HOGENOM" id="CLU_150500_1_0_7"/>
<dbReference type="OrthoDB" id="9791737at2"/>
<dbReference type="Proteomes" id="UP000000799">
    <property type="component" value="Chromosome"/>
</dbReference>
<dbReference type="GO" id="GO:0046872">
    <property type="term" value="F:metal ion binding"/>
    <property type="evidence" value="ECO:0007669"/>
    <property type="project" value="UniProtKB-UniRule"/>
</dbReference>
<dbReference type="GO" id="GO:0004521">
    <property type="term" value="F:RNA endonuclease activity"/>
    <property type="evidence" value="ECO:0007669"/>
    <property type="project" value="InterPro"/>
</dbReference>
<dbReference type="GO" id="GO:0051607">
    <property type="term" value="P:defense response to virus"/>
    <property type="evidence" value="ECO:0007669"/>
    <property type="project" value="UniProtKB-UniRule"/>
</dbReference>
<dbReference type="GO" id="GO:0043571">
    <property type="term" value="P:maintenance of CRISPR repeat elements"/>
    <property type="evidence" value="ECO:0007669"/>
    <property type="project" value="UniProtKB-UniRule"/>
</dbReference>
<dbReference type="CDD" id="cd09638">
    <property type="entry name" value="Cas2_I_II_III"/>
    <property type="match status" value="1"/>
</dbReference>
<dbReference type="HAMAP" id="MF_01471">
    <property type="entry name" value="Cas2"/>
    <property type="match status" value="1"/>
</dbReference>
<dbReference type="InterPro" id="IPR021127">
    <property type="entry name" value="CRISPR_associated_Cas2"/>
</dbReference>
<dbReference type="InterPro" id="IPR019199">
    <property type="entry name" value="Virulence_VapD/CRISPR_Cas2"/>
</dbReference>
<dbReference type="NCBIfam" id="TIGR01573">
    <property type="entry name" value="cas2"/>
    <property type="match status" value="1"/>
</dbReference>
<dbReference type="Pfam" id="PF09827">
    <property type="entry name" value="CRISPR_Cas2"/>
    <property type="match status" value="1"/>
</dbReference>
<dbReference type="SUPFAM" id="SSF143430">
    <property type="entry name" value="TTP0101/SSO1404-like"/>
    <property type="match status" value="1"/>
</dbReference>
<proteinExistence type="inferred from homology"/>
<evidence type="ECO:0000255" key="1">
    <source>
        <dbReference type="HAMAP-Rule" id="MF_01471"/>
    </source>
</evidence>
<keyword id="KW-0051">Antiviral defense</keyword>
<keyword id="KW-0255">Endonuclease</keyword>
<keyword id="KW-0378">Hydrolase</keyword>
<keyword id="KW-0460">Magnesium</keyword>
<keyword id="KW-0479">Metal-binding</keyword>
<keyword id="KW-0540">Nuclease</keyword>
<keyword id="KW-1185">Reference proteome</keyword>
<sequence length="143" mass="16854">MIEDKFMRVLLMFDVPTKSKKEQKLASKFRNNLIKLGYFMLQFSVYMRICKGLSSAKSSIENVKKILPPYGNVRALIITEKQFDKMELLLGGIVFNEKVNNETNLTLFDIDSHGEFKYKNSNNEEIQINKKQEKYHQQNLFEF</sequence>
<comment type="function">
    <text evidence="1">CRISPR (clustered regularly interspaced short palindromic repeat), is an adaptive immune system that provides protection against mobile genetic elements (viruses, transposable elements and conjugative plasmids). CRISPR clusters contain sequences complementary to antecedent mobile elements and target invading nucleic acids. CRISPR clusters are transcribed and processed into CRISPR RNA (crRNA). Functions as a ssRNA-specific endoribonuclease. Involved in the integration of spacer DNA into the CRISPR cassette.</text>
</comment>
<comment type="cofactor">
    <cofactor evidence="1">
        <name>Mg(2+)</name>
        <dbReference type="ChEBI" id="CHEBI:18420"/>
    </cofactor>
</comment>
<comment type="subunit">
    <text evidence="1">Homodimer, forms a heterotetramer with a Cas1 homodimer.</text>
</comment>
<comment type="similarity">
    <text evidence="1">Belongs to the CRISPR-associated endoribonuclease Cas2 protein family.</text>
</comment>
<name>CAS2_CAMJE</name>
<accession>Q0P899</accession>
<gene>
    <name evidence="1" type="primary">cas2</name>
    <name type="ordered locus">Cj1521c</name>
</gene>